<comment type="function">
    <text evidence="1">Associates with the EF-Tu.GDP complex and induces the exchange of GDP to GTP. It remains bound to the aminoacyl-tRNA.EF-Tu.GTP complex up to the GTP hydrolysis stage on the ribosome.</text>
</comment>
<comment type="subcellular location">
    <subcellularLocation>
        <location evidence="1">Cytoplasm</location>
    </subcellularLocation>
</comment>
<comment type="similarity">
    <text evidence="1">Belongs to the EF-Ts family.</text>
</comment>
<sequence length="294" mass="32696">MANITAQMVKELREKTGAGMMDCKKALVETEGDMEKAIDYLREKGIAKAAKKSDRVASEGMTHVISNEKHAVVLEVNAETDFVAKNDNFQQLVDALAKQILAVRPDSLEDALKTEMPNGQTVQDYITEAITKIGENISLRRFEVKEKADNSAFGEYIHMNGRIGVLTLLEGTTDTTVAKDVAMHIAAINPKYISREDVSTEEVEHEKEVLTQQALNEGKPANIVEKMVEGRLKKYLSEISLEDQPFVKNPDITVGDYVKQSGGKVVSFVRFEVGEGIEKKEDNFVEEVMSQVKK</sequence>
<feature type="chain" id="PRO_0000161144" description="Elongation factor Ts">
    <location>
        <begin position="1"/>
        <end position="294"/>
    </location>
</feature>
<feature type="region of interest" description="Involved in Mg(2+) ion dislocation from EF-Tu" evidence="1">
    <location>
        <begin position="80"/>
        <end position="83"/>
    </location>
</feature>
<name>EFTS_LISMF</name>
<organism>
    <name type="scientific">Listeria monocytogenes serotype 4b (strain F2365)</name>
    <dbReference type="NCBI Taxonomy" id="265669"/>
    <lineage>
        <taxon>Bacteria</taxon>
        <taxon>Bacillati</taxon>
        <taxon>Bacillota</taxon>
        <taxon>Bacilli</taxon>
        <taxon>Bacillales</taxon>
        <taxon>Listeriaceae</taxon>
        <taxon>Listeria</taxon>
    </lineage>
</organism>
<accession>Q71Z12</accession>
<protein>
    <recommendedName>
        <fullName evidence="1">Elongation factor Ts</fullName>
        <shortName evidence="1">EF-Ts</shortName>
    </recommendedName>
</protein>
<reference key="1">
    <citation type="journal article" date="2004" name="Nucleic Acids Res.">
        <title>Whole genome comparisons of serotype 4b and 1/2a strains of the food-borne pathogen Listeria monocytogenes reveal new insights into the core genome components of this species.</title>
        <authorList>
            <person name="Nelson K.E."/>
            <person name="Fouts D.E."/>
            <person name="Mongodin E.F."/>
            <person name="Ravel J."/>
            <person name="DeBoy R.T."/>
            <person name="Kolonay J.F."/>
            <person name="Rasko D.A."/>
            <person name="Angiuoli S.V."/>
            <person name="Gill S.R."/>
            <person name="Paulsen I.T."/>
            <person name="Peterson J.D."/>
            <person name="White O."/>
            <person name="Nelson W.C."/>
            <person name="Nierman W.C."/>
            <person name="Beanan M.J."/>
            <person name="Brinkac L.M."/>
            <person name="Daugherty S.C."/>
            <person name="Dodson R.J."/>
            <person name="Durkin A.S."/>
            <person name="Madupu R."/>
            <person name="Haft D.H."/>
            <person name="Selengut J."/>
            <person name="Van Aken S.E."/>
            <person name="Khouri H.M."/>
            <person name="Fedorova N."/>
            <person name="Forberger H.A."/>
            <person name="Tran B."/>
            <person name="Kathariou S."/>
            <person name="Wonderling L.D."/>
            <person name="Uhlich G.A."/>
            <person name="Bayles D.O."/>
            <person name="Luchansky J.B."/>
            <person name="Fraser C.M."/>
        </authorList>
    </citation>
    <scope>NUCLEOTIDE SEQUENCE [LARGE SCALE GENOMIC DNA]</scope>
    <source>
        <strain>F2365</strain>
    </source>
</reference>
<proteinExistence type="inferred from homology"/>
<evidence type="ECO:0000255" key="1">
    <source>
        <dbReference type="HAMAP-Rule" id="MF_00050"/>
    </source>
</evidence>
<dbReference type="EMBL" id="AE017262">
    <property type="protein sequence ID" value="AAT04452.1"/>
    <property type="molecule type" value="Genomic_DNA"/>
</dbReference>
<dbReference type="RefSeq" id="WP_003726264.1">
    <property type="nucleotide sequence ID" value="NC_002973.6"/>
</dbReference>
<dbReference type="SMR" id="Q71Z12"/>
<dbReference type="KEGG" id="lmf:LMOf2365_1678"/>
<dbReference type="HOGENOM" id="CLU_047155_0_2_9"/>
<dbReference type="GO" id="GO:0005737">
    <property type="term" value="C:cytoplasm"/>
    <property type="evidence" value="ECO:0007669"/>
    <property type="project" value="UniProtKB-SubCell"/>
</dbReference>
<dbReference type="GO" id="GO:0003746">
    <property type="term" value="F:translation elongation factor activity"/>
    <property type="evidence" value="ECO:0007669"/>
    <property type="project" value="UniProtKB-UniRule"/>
</dbReference>
<dbReference type="CDD" id="cd14275">
    <property type="entry name" value="UBA_EF-Ts"/>
    <property type="match status" value="1"/>
</dbReference>
<dbReference type="FunFam" id="1.10.286.20:FF:000003">
    <property type="entry name" value="Elongation factor Ts"/>
    <property type="match status" value="1"/>
</dbReference>
<dbReference type="FunFam" id="1.10.8.10:FF:000001">
    <property type="entry name" value="Elongation factor Ts"/>
    <property type="match status" value="1"/>
</dbReference>
<dbReference type="FunFam" id="3.30.479.20:FF:000005">
    <property type="entry name" value="Elongation factor Ts"/>
    <property type="match status" value="1"/>
</dbReference>
<dbReference type="Gene3D" id="1.10.286.20">
    <property type="match status" value="1"/>
</dbReference>
<dbReference type="Gene3D" id="1.10.8.10">
    <property type="entry name" value="DNA helicase RuvA subunit, C-terminal domain"/>
    <property type="match status" value="1"/>
</dbReference>
<dbReference type="Gene3D" id="3.30.479.20">
    <property type="entry name" value="Elongation factor Ts, dimerisation domain"/>
    <property type="match status" value="2"/>
</dbReference>
<dbReference type="HAMAP" id="MF_00050">
    <property type="entry name" value="EF_Ts"/>
    <property type="match status" value="1"/>
</dbReference>
<dbReference type="InterPro" id="IPR036402">
    <property type="entry name" value="EF-Ts_dimer_sf"/>
</dbReference>
<dbReference type="InterPro" id="IPR001816">
    <property type="entry name" value="Transl_elong_EFTs/EF1B"/>
</dbReference>
<dbReference type="InterPro" id="IPR014039">
    <property type="entry name" value="Transl_elong_EFTs/EF1B_dimer"/>
</dbReference>
<dbReference type="InterPro" id="IPR018101">
    <property type="entry name" value="Transl_elong_Ts_CS"/>
</dbReference>
<dbReference type="InterPro" id="IPR009060">
    <property type="entry name" value="UBA-like_sf"/>
</dbReference>
<dbReference type="NCBIfam" id="TIGR00116">
    <property type="entry name" value="tsf"/>
    <property type="match status" value="1"/>
</dbReference>
<dbReference type="PANTHER" id="PTHR11741">
    <property type="entry name" value="ELONGATION FACTOR TS"/>
    <property type="match status" value="1"/>
</dbReference>
<dbReference type="PANTHER" id="PTHR11741:SF0">
    <property type="entry name" value="ELONGATION FACTOR TS, MITOCHONDRIAL"/>
    <property type="match status" value="1"/>
</dbReference>
<dbReference type="Pfam" id="PF00889">
    <property type="entry name" value="EF_TS"/>
    <property type="match status" value="1"/>
</dbReference>
<dbReference type="SUPFAM" id="SSF54713">
    <property type="entry name" value="Elongation factor Ts (EF-Ts), dimerisation domain"/>
    <property type="match status" value="2"/>
</dbReference>
<dbReference type="SUPFAM" id="SSF46934">
    <property type="entry name" value="UBA-like"/>
    <property type="match status" value="1"/>
</dbReference>
<dbReference type="PROSITE" id="PS01126">
    <property type="entry name" value="EF_TS_1"/>
    <property type="match status" value="1"/>
</dbReference>
<dbReference type="PROSITE" id="PS01127">
    <property type="entry name" value="EF_TS_2"/>
    <property type="match status" value="1"/>
</dbReference>
<gene>
    <name evidence="1" type="primary">tsf</name>
    <name type="ordered locus">LMOf2365_1678</name>
</gene>
<keyword id="KW-0963">Cytoplasm</keyword>
<keyword id="KW-0251">Elongation factor</keyword>
<keyword id="KW-0648">Protein biosynthesis</keyword>